<keyword id="KW-0002">3D-structure</keyword>
<keyword id="KW-0051">Antiviral defense</keyword>
<keyword id="KW-0963">Cytoplasm</keyword>
<keyword id="KW-0456">Lyase</keyword>
<keyword id="KW-1185">Reference proteome</keyword>
<organism>
    <name type="scientific">Saccharolobus solfataricus (strain ATCC 35092 / DSM 1617 / JCM 11322 / P2)</name>
    <name type="common">Sulfolobus solfataricus</name>
    <dbReference type="NCBI Taxonomy" id="273057"/>
    <lineage>
        <taxon>Archaea</taxon>
        <taxon>Thermoproteota</taxon>
        <taxon>Thermoprotei</taxon>
        <taxon>Sulfolobales</taxon>
        <taxon>Sulfolobaceae</taxon>
        <taxon>Saccharolobus</taxon>
    </lineage>
</organism>
<proteinExistence type="evidence at protein level"/>
<feature type="chain" id="PRO_0000446012" description="CRISPR system ring nuclease SSO1393">
    <location>
        <begin position="1"/>
        <end position="321"/>
    </location>
</feature>
<feature type="site" description="Transition state stabilizer" evidence="4">
    <location>
        <position position="168"/>
    </location>
</feature>
<feature type="mutagenesis site" description="32-fold decrease in kcat for degradation of cA4." evidence="1">
    <original>S</original>
    <variation>A</variation>
    <location>
        <position position="11"/>
    </location>
</feature>
<feature type="mutagenesis site" description="No degradation of cA4." evidence="1">
    <original>K</original>
    <variation>A</variation>
    <location>
        <position position="168"/>
    </location>
</feature>
<feature type="strand" evidence="7">
    <location>
        <begin position="2"/>
        <end position="7"/>
    </location>
</feature>
<feature type="helix" evidence="7">
    <location>
        <begin position="11"/>
        <end position="15"/>
    </location>
</feature>
<feature type="helix" evidence="7">
    <location>
        <begin position="16"/>
        <end position="18"/>
    </location>
</feature>
<feature type="helix" evidence="7">
    <location>
        <begin position="20"/>
        <end position="28"/>
    </location>
</feature>
<feature type="helix" evidence="7">
    <location>
        <begin position="34"/>
        <end position="36"/>
    </location>
</feature>
<feature type="helix" evidence="7">
    <location>
        <begin position="44"/>
        <end position="49"/>
    </location>
</feature>
<feature type="helix" evidence="7">
    <location>
        <begin position="51"/>
        <end position="65"/>
    </location>
</feature>
<feature type="helix" evidence="7">
    <location>
        <begin position="67"/>
        <end position="69"/>
    </location>
</feature>
<feature type="helix" evidence="7">
    <location>
        <begin position="71"/>
        <end position="83"/>
    </location>
</feature>
<feature type="helix" evidence="7">
    <location>
        <begin position="87"/>
        <end position="89"/>
    </location>
</feature>
<feature type="strand" evidence="7">
    <location>
        <begin position="90"/>
        <end position="99"/>
    </location>
</feature>
<feature type="helix" evidence="7">
    <location>
        <begin position="100"/>
        <end position="115"/>
    </location>
</feature>
<feature type="strand" evidence="7">
    <location>
        <begin position="119"/>
        <end position="125"/>
    </location>
</feature>
<feature type="helix" evidence="7">
    <location>
        <begin position="131"/>
        <end position="144"/>
    </location>
</feature>
<feature type="helix" evidence="7">
    <location>
        <begin position="146"/>
        <end position="154"/>
    </location>
</feature>
<feature type="strand" evidence="7">
    <location>
        <begin position="158"/>
        <end position="162"/>
    </location>
</feature>
<feature type="strand" evidence="7">
    <location>
        <begin position="164"/>
        <end position="166"/>
    </location>
</feature>
<feature type="helix" evidence="7">
    <location>
        <begin position="168"/>
        <end position="180"/>
    </location>
</feature>
<feature type="strand" evidence="7">
    <location>
        <begin position="185"/>
        <end position="190"/>
    </location>
</feature>
<feature type="turn" evidence="7">
    <location>
        <begin position="191"/>
        <end position="194"/>
    </location>
</feature>
<feature type="strand" evidence="7">
    <location>
        <begin position="195"/>
        <end position="199"/>
    </location>
</feature>
<feature type="strand" evidence="7">
    <location>
        <begin position="204"/>
        <end position="206"/>
    </location>
</feature>
<feature type="helix" evidence="7">
    <location>
        <begin position="208"/>
        <end position="220"/>
    </location>
</feature>
<feature type="strand" evidence="7">
    <location>
        <begin position="222"/>
        <end position="225"/>
    </location>
</feature>
<feature type="helix" evidence="7">
    <location>
        <begin position="226"/>
        <end position="231"/>
    </location>
</feature>
<feature type="helix" evidence="7">
    <location>
        <begin position="236"/>
        <end position="241"/>
    </location>
</feature>
<feature type="strand" evidence="7">
    <location>
        <begin position="244"/>
        <end position="248"/>
    </location>
</feature>
<feature type="turn" evidence="7">
    <location>
        <begin position="249"/>
        <end position="251"/>
    </location>
</feature>
<feature type="strand" evidence="7">
    <location>
        <begin position="252"/>
        <end position="255"/>
    </location>
</feature>
<feature type="helix" evidence="7">
    <location>
        <begin position="257"/>
        <end position="263"/>
    </location>
</feature>
<feature type="turn" evidence="7">
    <location>
        <begin position="264"/>
        <end position="266"/>
    </location>
</feature>
<evidence type="ECO:0000269" key="1">
    <source>
    </source>
</evidence>
<evidence type="ECO:0000303" key="2">
    <source>
    </source>
</evidence>
<evidence type="ECO:0000305" key="3"/>
<evidence type="ECO:0000305" key="4">
    <source>
    </source>
</evidence>
<evidence type="ECO:0000305" key="5">
    <source ref="3"/>
</evidence>
<evidence type="ECO:0007744" key="6">
    <source>
        <dbReference type="PDB" id="3QYF"/>
    </source>
</evidence>
<evidence type="ECO:0007829" key="7">
    <source>
        <dbReference type="PDB" id="3QYF"/>
    </source>
</evidence>
<dbReference type="EC" id="4.6.1.-" evidence="3"/>
<dbReference type="EMBL" id="AE006641">
    <property type="protein sequence ID" value="AAK41629.1"/>
    <property type="molecule type" value="Genomic_DNA"/>
</dbReference>
<dbReference type="PIR" id="F90296">
    <property type="entry name" value="F90296"/>
</dbReference>
<dbReference type="RefSeq" id="WP_009990074.1">
    <property type="nucleotide sequence ID" value="NC_002754.1"/>
</dbReference>
<dbReference type="PDB" id="3QYF">
    <property type="method" value="X-ray"/>
    <property type="resolution" value="1.90 A"/>
    <property type="chains" value="A/B=1-321"/>
</dbReference>
<dbReference type="PDBsum" id="3QYF"/>
<dbReference type="SMR" id="Q97YD2"/>
<dbReference type="STRING" id="273057.SSO1393"/>
<dbReference type="PaxDb" id="273057-SSO1393"/>
<dbReference type="EnsemblBacteria" id="AAK41629">
    <property type="protein sequence ID" value="AAK41629"/>
    <property type="gene ID" value="SSO1393"/>
</dbReference>
<dbReference type="KEGG" id="sso:SSO1393"/>
<dbReference type="PATRIC" id="fig|273057.12.peg.1409"/>
<dbReference type="eggNOG" id="arCOG01935">
    <property type="taxonomic scope" value="Archaea"/>
</dbReference>
<dbReference type="HOGENOM" id="CLU_082641_1_0_2"/>
<dbReference type="InParanoid" id="Q97YD2"/>
<dbReference type="PhylomeDB" id="Q97YD2"/>
<dbReference type="EvolutionaryTrace" id="Q97YD2"/>
<dbReference type="Proteomes" id="UP000001974">
    <property type="component" value="Chromosome"/>
</dbReference>
<dbReference type="GO" id="GO:0005737">
    <property type="term" value="C:cytoplasm"/>
    <property type="evidence" value="ECO:0007669"/>
    <property type="project" value="UniProtKB-SubCell"/>
</dbReference>
<dbReference type="GO" id="GO:0016829">
    <property type="term" value="F:lyase activity"/>
    <property type="evidence" value="ECO:0007669"/>
    <property type="project" value="UniProtKB-KW"/>
</dbReference>
<dbReference type="GO" id="GO:0051607">
    <property type="term" value="P:defense response to virus"/>
    <property type="evidence" value="ECO:0007669"/>
    <property type="project" value="UniProtKB-KW"/>
</dbReference>
<dbReference type="CDD" id="cd09742">
    <property type="entry name" value="Csm6_III-A"/>
    <property type="match status" value="1"/>
</dbReference>
<dbReference type="Gene3D" id="1.10.196.30">
    <property type="match status" value="1"/>
</dbReference>
<dbReference type="Gene3D" id="3.40.50.10770">
    <property type="entry name" value="Hypothetical protein VC1899 like domain (Restriction endonuclease-like)"/>
    <property type="match status" value="1"/>
</dbReference>
<dbReference type="Gene3D" id="1.10.10.1690">
    <property type="entry name" value="Uncharacterised CRISPR-associated protein family, UPF0236"/>
    <property type="match status" value="1"/>
</dbReference>
<dbReference type="InterPro" id="IPR016620">
    <property type="entry name" value="SSO1393"/>
</dbReference>
<dbReference type="InterPro" id="IPR013442">
    <property type="entry name" value="SSO1393-like"/>
</dbReference>
<dbReference type="InterPro" id="IPR054041">
    <property type="entry name" value="SSO1393-like_WHD"/>
</dbReference>
<dbReference type="NCBIfam" id="NF040951">
    <property type="entry name" value="CRSPR_nucase"/>
    <property type="match status" value="1"/>
</dbReference>
<dbReference type="NCBIfam" id="TIGR02619">
    <property type="entry name" value="putative CRISPR-associated protein, APE2256 family"/>
    <property type="match status" value="1"/>
</dbReference>
<dbReference type="Pfam" id="PF09651">
    <property type="entry name" value="Cas_APE2256"/>
    <property type="match status" value="1"/>
</dbReference>
<dbReference type="Pfam" id="PF22165">
    <property type="entry name" value="SSO1393-like_WHD"/>
    <property type="match status" value="1"/>
</dbReference>
<dbReference type="PIRSF" id="PIRSF014470">
    <property type="entry name" value="UCP014470"/>
    <property type="match status" value="1"/>
</dbReference>
<comment type="function">
    <text evidence="1 3">CRISPR (clustered regularly interspaced short palindromic repeat) is an adaptive immune system that provides protection against mobile genetic elements (viruses, transposable elements and conjugative plasmids). CRISPR clusters contain spacers, sequences complementary to antecedent mobile elements, and target invading nucleic acids. CRISPR clusters are transcribed and processed into CRISPR RNA (crRNA) (Probable). A nuclease that degrades cyclic oligoadenylates (cOA), second messengers that induce an antiviral state important for defense against invading nucleic acids. Destruction of cOA deactivates the Csx1 ribonuclease, preventing uncontrolled degradation of cellular RNA. Slowly degrades cA4 (a tetraadenylate ring) into first a linear tetraadenylate product and secondly into a linear diadenylate product with 5'-OH and 2',3'-cyclic phosphate termini. Is 10-fold less active than SSO2081, suggesting it plays a minor role in cA4 degradation. There may be 2 active sites per homodimer (PubMed:30232454).</text>
</comment>
<comment type="catalytic activity">
    <reaction evidence="1">
        <text>cyclic tetraadenylate = 2 5'-hydroxy-diadenylate 2',3'-cylic phosphate</text>
        <dbReference type="Rhea" id="RHEA:58012"/>
        <dbReference type="ChEBI" id="CHEBI:142457"/>
        <dbReference type="ChEBI" id="CHEBI:142458"/>
    </reaction>
</comment>
<comment type="cofactor">
    <text evidence="1">Does not require a metal cofactor.</text>
</comment>
<comment type="biophysicochemical properties">
    <kinetics>
        <text evidence="1">kcat is 0.024 min(-1).</text>
    </kinetics>
</comment>
<comment type="subunit">
    <text evidence="4 5">Homodimer.</text>
</comment>
<comment type="subcellular location">
    <subcellularLocation>
        <location evidence="4">Cytoplasm</location>
    </subcellularLocation>
</comment>
<comment type="similarity">
    <text evidence="3">Belongs to the cOA ring nuclease family.</text>
</comment>
<name>RN393_SACS2</name>
<accession>Q97YD2</accession>
<protein>
    <recommendedName>
        <fullName evidence="2">CRISPR system ring nuclease SSO1393</fullName>
        <ecNumber evidence="3">4.6.1.-</ecNumber>
    </recommendedName>
</protein>
<sequence>MEVHVCSVGTSLLKNSLDDDNVRKEIERLGLKDWDRLKFDDDRQNRIKENFDSLRKMLLKFIRSKGRRASAELDSLFSTFEKLKHNKSEIYVFLYSTNTSNSQLAGEVIRDYLIEEGIRSELVTVKTISSEENFYEGIVDLFDKVIYRILKFKEQDNEVYINATPGLKPESIFLTLAGLLAGADLIYYKYQEFNDVVILPSPPITIRPKYLDWLIRFAISGYTLSEKRAEELGIPVRLLEAKMLVERKGEDAYRLKDWVRKLLGIYLPIGAQNKYYRVIVEGEGERTFDNEVEAYNYMESKRKEGKNVRVEVPDRVYFLGL</sequence>
<gene>
    <name type="ordered locus">SSO1393</name>
</gene>
<reference key="1">
    <citation type="journal article" date="2001" name="Proc. Natl. Acad. Sci. U.S.A.">
        <title>The complete genome of the crenarchaeon Sulfolobus solfataricus P2.</title>
        <authorList>
            <person name="She Q."/>
            <person name="Singh R.K."/>
            <person name="Confalonieri F."/>
            <person name="Zivanovic Y."/>
            <person name="Allard G."/>
            <person name="Awayez M.J."/>
            <person name="Chan-Weiher C.C.-Y."/>
            <person name="Clausen I.G."/>
            <person name="Curtis B.A."/>
            <person name="De Moors A."/>
            <person name="Erauso G."/>
            <person name="Fletcher C."/>
            <person name="Gordon P.M.K."/>
            <person name="Heikamp-de Jong I."/>
            <person name="Jeffries A.C."/>
            <person name="Kozera C.J."/>
            <person name="Medina N."/>
            <person name="Peng X."/>
            <person name="Thi-Ngoc H.P."/>
            <person name="Redder P."/>
            <person name="Schenk M.E."/>
            <person name="Theriault C."/>
            <person name="Tolstrup N."/>
            <person name="Charlebois R.L."/>
            <person name="Doolittle W.F."/>
            <person name="Duguet M."/>
            <person name="Gaasterland T."/>
            <person name="Garrett R.A."/>
            <person name="Ragan M.A."/>
            <person name="Sensen C.W."/>
            <person name="Van der Oost J."/>
        </authorList>
    </citation>
    <scope>NUCLEOTIDE SEQUENCE [LARGE SCALE GENOMIC DNA]</scope>
    <source>
        <strain>ATCC 35092 / DSM 1617 / JCM 11322 / P2</strain>
    </source>
</reference>
<reference key="2">
    <citation type="journal article" date="2018" name="Nature">
        <title>Ring nucleases deactivate type III CRISPR ribonucleases by degrading cyclic oligoadenylate.</title>
        <authorList>
            <person name="Athukoralage J.S."/>
            <person name="Rouillon C."/>
            <person name="Graham S."/>
            <person name="Grueschow S."/>
            <person name="White M.F."/>
        </authorList>
    </citation>
    <scope>FUNCTION</scope>
    <scope>CATALYTIC ACTIVITY</scope>
    <scope>COFACTOR</scope>
    <scope>BIOPHYSICOCHEMICAL PROPERTIES</scope>
    <scope>SUBCELLULAR LOCATION</scope>
    <scope>MUTAGENESIS OF SER-11 AND LYS-168</scope>
    <source>
        <strain>ATCC 35092 / DSM 1617 / JCM 11322 / P2</strain>
    </source>
</reference>
<reference evidence="6" key="3">
    <citation type="submission" date="2011-03" db="PDB data bank">
        <title>Crystal structure of the CRISPR-associated protein SSO1393 from Sulfolobus solfataricus.</title>
        <authorList>
            <person name="Petit P."/>
            <person name="Xu X."/>
            <person name="Beloglazova N."/>
            <person name="Brown G."/>
            <person name="Savchenko A."/>
            <person name="Yakunin A.F."/>
        </authorList>
    </citation>
    <scope>X-RAY CRYSTALLOGRAPHY (1.90 ANGSTROMS)</scope>
    <scope>SUBUNIT</scope>
</reference>